<sequence length="136" mass="14765">LEQVLEYYLGECLRYVNRGLGLFPDCDGMYLQLSYFVQLGALTLQHGGDQPVKLLVDHGALLAGLRSLARVLADALLAGNPEAAVAFYQFYGPARLQPLQPLVTALGNSPAQSIEYVQEPVRVPTDCDATCAQARL</sequence>
<proteinExistence type="predicted"/>
<name>YTA1_PSEAJ</name>
<dbReference type="EMBL" id="M88485">
    <property type="protein sequence ID" value="AAB41800.1"/>
    <property type="molecule type" value="Genomic_DNA"/>
</dbReference>
<dbReference type="PIR" id="S27647">
    <property type="entry name" value="S27647"/>
</dbReference>
<dbReference type="SMR" id="P31849"/>
<feature type="chain" id="PRO_0000066522" description="Uncharacterized protein in tabA 5'region">
    <location>
        <begin position="1" status="less than"/>
        <end position="136"/>
    </location>
</feature>
<feature type="non-terminal residue">
    <location>
        <position position="1"/>
    </location>
</feature>
<protein>
    <recommendedName>
        <fullName>Uncharacterized protein in tabA 5'region</fullName>
    </recommendedName>
    <alternativeName>
        <fullName>ORF1</fullName>
    </alternativeName>
</protein>
<organism>
    <name type="scientific">Pseudomonas amygdali pv. tabaci</name>
    <name type="common">Pseudomonas syringae pv. tabaci</name>
    <dbReference type="NCBI Taxonomy" id="322"/>
    <lineage>
        <taxon>Bacteria</taxon>
        <taxon>Pseudomonadati</taxon>
        <taxon>Pseudomonadota</taxon>
        <taxon>Gammaproteobacteria</taxon>
        <taxon>Pseudomonadales</taxon>
        <taxon>Pseudomonadaceae</taxon>
        <taxon>Pseudomonas</taxon>
        <taxon>Pseudomonas amygdali</taxon>
    </lineage>
</organism>
<reference key="1">
    <citation type="journal article" date="1992" name="Mol. Plant Microbe Interact.">
        <title>Identification of a lysA-like gene required for tabtoxin biosynthesis and pathogenicity in Pseudomonas syringae pv. tabaci strain PTBR2.024.</title>
        <authorList>
            <person name="Engst K."/>
            <person name="Shaw P.D."/>
        </authorList>
    </citation>
    <scope>NUCLEOTIDE SEQUENCE [GENOMIC DNA]</scope>
    <source>
        <strain>PTBR2.024</strain>
    </source>
</reference>
<accession>P31849</accession>